<organism>
    <name type="scientific">Rattus norvegicus</name>
    <name type="common">Rat</name>
    <dbReference type="NCBI Taxonomy" id="10116"/>
    <lineage>
        <taxon>Eukaryota</taxon>
        <taxon>Metazoa</taxon>
        <taxon>Chordata</taxon>
        <taxon>Craniata</taxon>
        <taxon>Vertebrata</taxon>
        <taxon>Euteleostomi</taxon>
        <taxon>Mammalia</taxon>
        <taxon>Eutheria</taxon>
        <taxon>Euarchontoglires</taxon>
        <taxon>Glires</taxon>
        <taxon>Rodentia</taxon>
        <taxon>Myomorpha</taxon>
        <taxon>Muroidea</taxon>
        <taxon>Muridae</taxon>
        <taxon>Murinae</taxon>
        <taxon>Rattus</taxon>
    </lineage>
</organism>
<reference key="1">
    <citation type="journal article" date="2003" name="Eur. J. Neurosci.">
        <title>Two variants of the rat brain sodium-driven chloride bicarbonate exchanger (NCBE): developmental expression and addition of a PDZ motif.</title>
        <authorList>
            <person name="Giffard R.G."/>
            <person name="Lee Y.-S."/>
            <person name="Ouyang Y.-B."/>
            <person name="Murphy S.L."/>
            <person name="Monyer H."/>
        </authorList>
    </citation>
    <scope>NUCLEOTIDE SEQUENCE [MRNA] (ISOFORMS 1 AND 3)</scope>
    <scope>TISSUE SPECIFICITY</scope>
    <source>
        <tissue>Brain</tissue>
    </source>
</reference>
<reference evidence="19" key="2">
    <citation type="journal article" date="2013" name="PLoS ONE">
        <title>Cloning and functional characterization of novel variants and tissue-specific expression of alternative amino and carboxyl termini of products of slc4a10.</title>
        <authorList>
            <person name="Liu Y."/>
            <person name="Wang D.K."/>
            <person name="Jiang D.Z."/>
            <person name="Qin X."/>
            <person name="Xie Z.D."/>
            <person name="Wang Q.K."/>
            <person name="Liu M."/>
            <person name="Chen L.M."/>
        </authorList>
    </citation>
    <scope>NUCLEOTIDE SEQUENCE [MRNA] (ISOFORMS 8; 9; 10 AND 11)</scope>
    <scope>FUNCTION</scope>
    <scope>TISSUE SPECIFICITY</scope>
    <scope>ALTERNATIVE PROMOTER USAGE</scope>
    <scope>ALTERNATIVE SPLICING</scope>
    <source>
        <strain evidence="19">Wistar</strain>
        <tissue evidence="19">Brain</tissue>
        <tissue evidence="20">Kidney</tissue>
    </source>
</reference>
<reference key="3">
    <citation type="journal article" date="2019" name="Front. Physiol.">
        <title>Expression, Localization, and Effect of High Salt Intake on Electroneutral Na+/HCO3 - Cotransporter NBCn2 in Rat Small Intestine: Implication in Intestinal NaCl Absorption.</title>
        <authorList>
            <person name="Wang J.L."/>
            <person name="Zhao L."/>
            <person name="Zhu J."/>
            <person name="Wang D.K."/>
            <person name="Ren M.J."/>
            <person name="Wang M."/>
            <person name="Liu Y."/>
            <person name="Boron W.F."/>
            <person name="Chen L.M."/>
        </authorList>
    </citation>
    <scope>NUCLEOTIDE SEQUENCE [MRNA] (ISOFORM 12)</scope>
    <scope>ALTERNATIVE SPLICING (ISOFORM 3)</scope>
    <scope>FUNCTION (ISOFORM 12)</scope>
    <scope>CATALYTIC ACTIVITY (ISOFORMS 3 AND 12)</scope>
    <scope>SUBCELLULAR LOCATION (ISOFORM 12)</scope>
    <scope>TISSUE SPECIFICITY (ISOFORM 12)</scope>
    <source>
        <strain>Wistar</strain>
        <tissue>Small intestine</tissue>
    </source>
</reference>
<reference key="4">
    <citation type="submission" date="2004-03" db="EMBL/GenBank/DDBJ databases">
        <title>Cloning and functional characterization of 'rb5NCBE'.</title>
        <authorList>
            <person name="Karim Z."/>
            <person name="Attmane-Elakeb A."/>
            <person name="Vernimmen C."/>
            <person name="Bichara M.M."/>
        </authorList>
    </citation>
    <scope>NUCLEOTIDE SEQUENCE [MRNA] (ISOFORMS 2; 4; 5; 6 AND 7)</scope>
    <source>
        <strain>Sprague-Dawley</strain>
        <tissue>Brain</tissue>
    </source>
</reference>
<reference key="5">
    <citation type="journal article" date="2004" name="Nature">
        <title>Genome sequence of the Brown Norway rat yields insights into mammalian evolution.</title>
        <authorList>
            <person name="Gibbs R.A."/>
            <person name="Weinstock G.M."/>
            <person name="Metzker M.L."/>
            <person name="Muzny D.M."/>
            <person name="Sodergren E.J."/>
            <person name="Scherer S."/>
            <person name="Scott G."/>
            <person name="Steffen D."/>
            <person name="Worley K.C."/>
            <person name="Burch P.E."/>
            <person name="Okwuonu G."/>
            <person name="Hines S."/>
            <person name="Lewis L."/>
            <person name="Deramo C."/>
            <person name="Delgado O."/>
            <person name="Dugan-Rocha S."/>
            <person name="Miner G."/>
            <person name="Morgan M."/>
            <person name="Hawes A."/>
            <person name="Gill R."/>
            <person name="Holt R.A."/>
            <person name="Adams M.D."/>
            <person name="Amanatides P.G."/>
            <person name="Baden-Tillson H."/>
            <person name="Barnstead M."/>
            <person name="Chin S."/>
            <person name="Evans C.A."/>
            <person name="Ferriera S."/>
            <person name="Fosler C."/>
            <person name="Glodek A."/>
            <person name="Gu Z."/>
            <person name="Jennings D."/>
            <person name="Kraft C.L."/>
            <person name="Nguyen T."/>
            <person name="Pfannkoch C.M."/>
            <person name="Sitter C."/>
            <person name="Sutton G.G."/>
            <person name="Venter J.C."/>
            <person name="Woodage T."/>
            <person name="Smith D."/>
            <person name="Lee H.-M."/>
            <person name="Gustafson E."/>
            <person name="Cahill P."/>
            <person name="Kana A."/>
            <person name="Doucette-Stamm L."/>
            <person name="Weinstock K."/>
            <person name="Fechtel K."/>
            <person name="Weiss R.B."/>
            <person name="Dunn D.M."/>
            <person name="Green E.D."/>
            <person name="Blakesley R.W."/>
            <person name="Bouffard G.G."/>
            <person name="De Jong P.J."/>
            <person name="Osoegawa K."/>
            <person name="Zhu B."/>
            <person name="Marra M."/>
            <person name="Schein J."/>
            <person name="Bosdet I."/>
            <person name="Fjell C."/>
            <person name="Jones S."/>
            <person name="Krzywinski M."/>
            <person name="Mathewson C."/>
            <person name="Siddiqui A."/>
            <person name="Wye N."/>
            <person name="McPherson J."/>
            <person name="Zhao S."/>
            <person name="Fraser C.M."/>
            <person name="Shetty J."/>
            <person name="Shatsman S."/>
            <person name="Geer K."/>
            <person name="Chen Y."/>
            <person name="Abramzon S."/>
            <person name="Nierman W.C."/>
            <person name="Havlak P.H."/>
            <person name="Chen R."/>
            <person name="Durbin K.J."/>
            <person name="Egan A."/>
            <person name="Ren Y."/>
            <person name="Song X.-Z."/>
            <person name="Li B."/>
            <person name="Liu Y."/>
            <person name="Qin X."/>
            <person name="Cawley S."/>
            <person name="Cooney A.J."/>
            <person name="D'Souza L.M."/>
            <person name="Martin K."/>
            <person name="Wu J.Q."/>
            <person name="Gonzalez-Garay M.L."/>
            <person name="Jackson A.R."/>
            <person name="Kalafus K.J."/>
            <person name="McLeod M.P."/>
            <person name="Milosavljevic A."/>
            <person name="Virk D."/>
            <person name="Volkov A."/>
            <person name="Wheeler D.A."/>
            <person name="Zhang Z."/>
            <person name="Bailey J.A."/>
            <person name="Eichler E.E."/>
            <person name="Tuzun E."/>
            <person name="Birney E."/>
            <person name="Mongin E."/>
            <person name="Ureta-Vidal A."/>
            <person name="Woodwark C."/>
            <person name="Zdobnov E."/>
            <person name="Bork P."/>
            <person name="Suyama M."/>
            <person name="Torrents D."/>
            <person name="Alexandersson M."/>
            <person name="Trask B.J."/>
            <person name="Young J.M."/>
            <person name="Huang H."/>
            <person name="Wang H."/>
            <person name="Xing H."/>
            <person name="Daniels S."/>
            <person name="Gietzen D."/>
            <person name="Schmidt J."/>
            <person name="Stevens K."/>
            <person name="Vitt U."/>
            <person name="Wingrove J."/>
            <person name="Camara F."/>
            <person name="Mar Alba M."/>
            <person name="Abril J.F."/>
            <person name="Guigo R."/>
            <person name="Smit A."/>
            <person name="Dubchak I."/>
            <person name="Rubin E.M."/>
            <person name="Couronne O."/>
            <person name="Poliakov A."/>
            <person name="Huebner N."/>
            <person name="Ganten D."/>
            <person name="Goesele C."/>
            <person name="Hummel O."/>
            <person name="Kreitler T."/>
            <person name="Lee Y.-A."/>
            <person name="Monti J."/>
            <person name="Schulz H."/>
            <person name="Zimdahl H."/>
            <person name="Himmelbauer H."/>
            <person name="Lehrach H."/>
            <person name="Jacob H.J."/>
            <person name="Bromberg S."/>
            <person name="Gullings-Handley J."/>
            <person name="Jensen-Seaman M.I."/>
            <person name="Kwitek A.E."/>
            <person name="Lazar J."/>
            <person name="Pasko D."/>
            <person name="Tonellato P.J."/>
            <person name="Twigger S."/>
            <person name="Ponting C.P."/>
            <person name="Duarte J.M."/>
            <person name="Rice S."/>
            <person name="Goodstadt L."/>
            <person name="Beatson S.A."/>
            <person name="Emes R.D."/>
            <person name="Winter E.E."/>
            <person name="Webber C."/>
            <person name="Brandt P."/>
            <person name="Nyakatura G."/>
            <person name="Adetobi M."/>
            <person name="Chiaromonte F."/>
            <person name="Elnitski L."/>
            <person name="Eswara P."/>
            <person name="Hardison R.C."/>
            <person name="Hou M."/>
            <person name="Kolbe D."/>
            <person name="Makova K."/>
            <person name="Miller W."/>
            <person name="Nekrutenko A."/>
            <person name="Riemer C."/>
            <person name="Schwartz S."/>
            <person name="Taylor J."/>
            <person name="Yang S."/>
            <person name="Zhang Y."/>
            <person name="Lindpaintner K."/>
            <person name="Andrews T.D."/>
            <person name="Caccamo M."/>
            <person name="Clamp M."/>
            <person name="Clarke L."/>
            <person name="Curwen V."/>
            <person name="Durbin R.M."/>
            <person name="Eyras E."/>
            <person name="Searle S.M."/>
            <person name="Cooper G.M."/>
            <person name="Batzoglou S."/>
            <person name="Brudno M."/>
            <person name="Sidow A."/>
            <person name="Stone E.A."/>
            <person name="Payseur B.A."/>
            <person name="Bourque G."/>
            <person name="Lopez-Otin C."/>
            <person name="Puente X.S."/>
            <person name="Chakrabarti K."/>
            <person name="Chatterji S."/>
            <person name="Dewey C."/>
            <person name="Pachter L."/>
            <person name="Bray N."/>
            <person name="Yap V.B."/>
            <person name="Caspi A."/>
            <person name="Tesler G."/>
            <person name="Pevzner P.A."/>
            <person name="Haussler D."/>
            <person name="Roskin K.M."/>
            <person name="Baertsch R."/>
            <person name="Clawson H."/>
            <person name="Furey T.S."/>
            <person name="Hinrichs A.S."/>
            <person name="Karolchik D."/>
            <person name="Kent W.J."/>
            <person name="Rosenbloom K.R."/>
            <person name="Trumbower H."/>
            <person name="Weirauch M."/>
            <person name="Cooper D.N."/>
            <person name="Stenson P.D."/>
            <person name="Ma B."/>
            <person name="Brent M."/>
            <person name="Arumugam M."/>
            <person name="Shteynberg D."/>
            <person name="Copley R.R."/>
            <person name="Taylor M.S."/>
            <person name="Riethman H."/>
            <person name="Mudunuri U."/>
            <person name="Peterson J."/>
            <person name="Guyer M."/>
            <person name="Felsenfeld A."/>
            <person name="Old S."/>
            <person name="Mockrin S."/>
            <person name="Collins F.S."/>
        </authorList>
    </citation>
    <scope>NUCLEOTIDE SEQUENCE [LARGE SCALE GENOMIC DNA]</scope>
    <source>
        <strain>Brown Norway</strain>
    </source>
</reference>
<reference key="6">
    <citation type="journal article" date="2000" name="J. Biol. Chem.">
        <title>The Na+-driven Cl-/HCO3- exchanger. Cloning, tissue distribution, and functional characterization.</title>
        <authorList>
            <person name="Wang C.-Z."/>
            <person name="Yano H."/>
            <person name="Nagashima K."/>
            <person name="Seino S."/>
        </authorList>
    </citation>
    <scope>TISSUE SPECIFICITY</scope>
</reference>
<reference key="7">
    <citation type="journal article" date="2004" name="Am. J. Physiol.">
        <title>A SCL4A10 gene product maps selectively to the basolateral plasma membrane of choroid plexus epithelial cells.</title>
        <authorList>
            <person name="Praetorius J."/>
            <person name="Nejsum L.N."/>
            <person name="Nielsen S."/>
        </authorList>
    </citation>
    <scope>TISSUE SPECIFICITY</scope>
    <scope>DEVELOPMENTAL STAGE</scope>
    <scope>SUBCELLULAR LOCATION</scope>
</reference>
<reference key="8">
    <citation type="journal article" date="2008" name="Neuroscience">
        <title>Use of a new polyclonal antibody to study the distribution and glycosylation of the sodium-coupled bicarbonate transporter NCBE in rodent brain.</title>
        <authorList>
            <person name="Chen L.M."/>
            <person name="Kelly M.L."/>
            <person name="Rojas J.D."/>
            <person name="Parker M.D."/>
            <person name="Gill H.S."/>
            <person name="Davis B.A."/>
            <person name="Boron W.F."/>
        </authorList>
    </citation>
    <scope>SUBCELLULAR LOCATION</scope>
    <scope>TISSUE SPECIFICITY</scope>
</reference>
<reference key="9">
    <citation type="journal article" date="2010" name="J. Biol. Chem.">
        <title>Na+-dependent HCO3- import by the slc4a10 gene product involves Cl- export.</title>
        <authorList>
            <person name="Damkier H.H."/>
            <person name="Aalkjaer C."/>
            <person name="Praetorius J."/>
        </authorList>
    </citation>
    <scope>FUNCTION</scope>
    <scope>CATALYTIC ACTIVITY</scope>
</reference>
<reference key="10">
    <citation type="journal article" date="2012" name="Nat. Commun.">
        <title>Quantitative maps of protein phosphorylation sites across 14 different rat organs and tissues.</title>
        <authorList>
            <person name="Lundby A."/>
            <person name="Secher A."/>
            <person name="Lage K."/>
            <person name="Nordsborg N.B."/>
            <person name="Dmytriyev A."/>
            <person name="Lundby C."/>
            <person name="Olsen J.V."/>
        </authorList>
    </citation>
    <scope>PHOSPHORYLATION [LARGE SCALE ANALYSIS] AT SER-89</scope>
    <scope>IDENTIFICATION BY MASS SPECTROMETRY [LARGE SCALE ANALYSIS]</scope>
</reference>
<reference key="11">
    <citation type="journal article" date="2013" name="Front. Physiol.">
        <title>The N-terminal cytoplasmic region of NCBE displays features of an intrinsic disordered structure and represents a novel target for specific drug screening.</title>
        <authorList>
            <person name="Bjerregaard-Andersen K."/>
            <person name="Perdreau-Dahl H."/>
            <person name="Guldsten H."/>
            <person name="Praetorius J."/>
            <person name="Jensen J.K."/>
            <person name="Morth J.P."/>
        </authorList>
    </citation>
    <scope>CRYSTALLIZATION</scope>
    <scope>PRELIMINARY X-RAY CRYSTALLOGRAPHY (4.0 ANGSTROMS) OF 96-396</scope>
    <scope>INTRINSICALLY DISORDERED REGION</scope>
</reference>
<reference key="12">
    <citation type="journal article" date="2017" name="J. Am. Soc. Nephrol.">
        <title>Na+/HCO3- cotransporter NBCn2 mediates HCO3- reclamation in the apical membrane of renal proximal tubules.</title>
        <authorList>
            <person name="Guo Y.M."/>
            <person name="Liu Y."/>
            <person name="Liu M."/>
            <person name="Wang J.L."/>
            <person name="Xie Z.D."/>
            <person name="Chen K.J."/>
            <person name="Wang D.K."/>
            <person name="Occhipinti R."/>
            <person name="Boron W.F."/>
            <person name="Chen L.M."/>
        </authorList>
    </citation>
    <scope>FUNCTION</scope>
    <scope>SUBCELLULAR LOCATION</scope>
    <scope>TISSUE SPECIFICITY</scope>
</reference>
<keyword id="KW-0877">Alternative promoter usage</keyword>
<keyword id="KW-0025">Alternative splicing</keyword>
<keyword id="KW-0050">Antiport</keyword>
<keyword id="KW-1003">Cell membrane</keyword>
<keyword id="KW-0966">Cell projection</keyword>
<keyword id="KW-0325">Glycoprotein</keyword>
<keyword id="KW-0406">Ion transport</keyword>
<keyword id="KW-0472">Membrane</keyword>
<keyword id="KW-0597">Phosphoprotein</keyword>
<keyword id="KW-1185">Reference proteome</keyword>
<keyword id="KW-0915">Sodium</keyword>
<keyword id="KW-0739">Sodium transport</keyword>
<keyword id="KW-0769">Symport</keyword>
<keyword id="KW-0770">Synapse</keyword>
<keyword id="KW-0812">Transmembrane</keyword>
<keyword id="KW-1133">Transmembrane helix</keyword>
<keyword id="KW-0813">Transport</keyword>
<proteinExistence type="evidence at protein level"/>
<evidence type="ECO:0000250" key="1">
    <source>
        <dbReference type="UniProtKB" id="Q5DTL9"/>
    </source>
</evidence>
<evidence type="ECO:0000250" key="2">
    <source>
        <dbReference type="UniProtKB" id="Q6U841"/>
    </source>
</evidence>
<evidence type="ECO:0000255" key="3"/>
<evidence type="ECO:0000256" key="4">
    <source>
        <dbReference type="SAM" id="MobiDB-lite"/>
    </source>
</evidence>
<evidence type="ECO:0000269" key="5">
    <source>
    </source>
</evidence>
<evidence type="ECO:0000269" key="6">
    <source>
    </source>
</evidence>
<evidence type="ECO:0000269" key="7">
    <source>
    </source>
</evidence>
<evidence type="ECO:0000269" key="8">
    <source>
    </source>
</evidence>
<evidence type="ECO:0000269" key="9">
    <source>
    </source>
</evidence>
<evidence type="ECO:0000269" key="10">
    <source>
    </source>
</evidence>
<evidence type="ECO:0000269" key="11">
    <source>
    </source>
</evidence>
<evidence type="ECO:0000269" key="12">
    <source>
    </source>
</evidence>
<evidence type="ECO:0000303" key="13">
    <source>
    </source>
</evidence>
<evidence type="ECO:0000303" key="14">
    <source>
    </source>
</evidence>
<evidence type="ECO:0000303" key="15">
    <source>
    </source>
</evidence>
<evidence type="ECO:0000303" key="16">
    <source>
    </source>
</evidence>
<evidence type="ECO:0000303" key="17">
    <source ref="4"/>
</evidence>
<evidence type="ECO:0000305" key="18"/>
<evidence type="ECO:0000312" key="19">
    <source>
        <dbReference type="EMBL" id="AFP48940.1"/>
    </source>
</evidence>
<evidence type="ECO:0000312" key="20">
    <source>
        <dbReference type="EMBL" id="AGX00872.1"/>
    </source>
</evidence>
<evidence type="ECO:0000312" key="21">
    <source>
        <dbReference type="RGD" id="631407"/>
    </source>
</evidence>
<evidence type="ECO:0007744" key="22">
    <source>
    </source>
</evidence>
<accession>Q80ZA5</accession>
<accession>A0A0G2JYF0</accession>
<accession>A0A2L1K0J5</accession>
<accession>D3ZGB5</accession>
<accession>D3ZY00</accession>
<accession>D4ADV4</accession>
<accession>J7FMV4</accession>
<accession>J7FPF5</accession>
<accession>J7FRI2</accession>
<accession>J7FTX0</accession>
<accession>Q6PU70</accession>
<accession>Q6PU71</accession>
<accession>Q6PU72</accession>
<accession>Q6PU73</accession>
<accession>Q6PU74</accession>
<accession>Q80ZA6</accession>
<feature type="chain" id="PRO_0000245242" description="Sodium-driven chloride bicarbonate exchanger">
    <location>
        <begin position="1"/>
        <end position="1117"/>
    </location>
</feature>
<feature type="topological domain" description="Cytoplasmic" evidence="3">
    <location>
        <begin position="1"/>
        <end position="508"/>
    </location>
</feature>
<feature type="transmembrane region" description="Helical" evidence="3">
    <location>
        <begin position="509"/>
        <end position="529"/>
    </location>
</feature>
<feature type="topological domain" description="Extracellular" evidence="3">
    <location>
        <begin position="530"/>
        <end position="537"/>
    </location>
</feature>
<feature type="transmembrane region" description="Helical" evidence="3">
    <location>
        <begin position="538"/>
        <end position="558"/>
    </location>
</feature>
<feature type="topological domain" description="Cytoplasmic" evidence="3">
    <location>
        <begin position="559"/>
        <end position="561"/>
    </location>
</feature>
<feature type="transmembrane region" description="Helical" evidence="3">
    <location>
        <begin position="562"/>
        <end position="582"/>
    </location>
</feature>
<feature type="topological domain" description="Extracellular" evidence="3">
    <location>
        <begin position="583"/>
        <end position="595"/>
    </location>
</feature>
<feature type="transmembrane region" description="Helical" evidence="3">
    <location>
        <begin position="596"/>
        <end position="616"/>
    </location>
</feature>
<feature type="topological domain" description="Cytoplasmic" evidence="3">
    <location>
        <begin position="617"/>
        <end position="625"/>
    </location>
</feature>
<feature type="transmembrane region" description="Helical" evidence="3">
    <location>
        <begin position="626"/>
        <end position="646"/>
    </location>
</feature>
<feature type="topological domain" description="Extracellular" evidence="3">
    <location>
        <begin position="647"/>
        <end position="719"/>
    </location>
</feature>
<feature type="transmembrane region" description="Helical" evidence="3">
    <location>
        <begin position="720"/>
        <end position="740"/>
    </location>
</feature>
<feature type="topological domain" description="Cytoplasmic" evidence="3">
    <location>
        <begin position="741"/>
        <end position="761"/>
    </location>
</feature>
<feature type="transmembrane region" description="Helical" evidence="3">
    <location>
        <begin position="762"/>
        <end position="782"/>
    </location>
</feature>
<feature type="topological domain" description="Extracellular" evidence="3">
    <location>
        <begin position="783"/>
        <end position="808"/>
    </location>
</feature>
<feature type="transmembrane region" description="Helical" evidence="3">
    <location>
        <begin position="809"/>
        <end position="829"/>
    </location>
</feature>
<feature type="topological domain" description="Cytoplasmic" evidence="3">
    <location>
        <begin position="830"/>
        <end position="854"/>
    </location>
</feature>
<feature type="transmembrane region" description="Helical" evidence="3">
    <location>
        <begin position="855"/>
        <end position="875"/>
    </location>
</feature>
<feature type="topological domain" description="Extracellular" evidence="3">
    <location>
        <begin position="876"/>
        <end position="911"/>
    </location>
</feature>
<feature type="transmembrane region" description="Helical" evidence="3">
    <location>
        <begin position="912"/>
        <end position="932"/>
    </location>
</feature>
<feature type="topological domain" description="Cytoplasmic" evidence="3">
    <location>
        <begin position="933"/>
        <end position="934"/>
    </location>
</feature>
<feature type="transmembrane region" description="Helical" evidence="3">
    <location>
        <begin position="935"/>
        <end position="955"/>
    </location>
</feature>
<feature type="topological domain" description="Extracellular" evidence="3">
    <location>
        <begin position="956"/>
        <end position="997"/>
    </location>
</feature>
<feature type="transmembrane region" description="Helical" evidence="3">
    <location>
        <begin position="998"/>
        <end position="1018"/>
    </location>
</feature>
<feature type="topological domain" description="Cytoplasmic" evidence="3">
    <location>
        <begin position="1019"/>
        <end position="1117"/>
    </location>
</feature>
<feature type="region of interest" description="Disordered" evidence="4">
    <location>
        <begin position="1"/>
        <end position="23"/>
    </location>
</feature>
<feature type="region of interest" description="Disordered" evidence="4">
    <location>
        <begin position="58"/>
        <end position="97"/>
    </location>
</feature>
<feature type="region of interest" description="Disordered" evidence="4">
    <location>
        <begin position="282"/>
        <end position="309"/>
    </location>
</feature>
<feature type="region of interest" description="Disordered" evidence="4">
    <location>
        <begin position="431"/>
        <end position="476"/>
    </location>
</feature>
<feature type="compositionally biased region" description="Basic residues" evidence="4">
    <location>
        <begin position="59"/>
        <end position="76"/>
    </location>
</feature>
<feature type="modified residue" description="Phosphoserine" evidence="22">
    <location>
        <position position="89"/>
    </location>
</feature>
<feature type="modified residue" description="Phosphothreonine" evidence="1">
    <location>
        <position position="94"/>
    </location>
</feature>
<feature type="modified residue" description="Phosphoserine" evidence="1">
    <location>
        <position position="275"/>
    </location>
</feature>
<feature type="modified residue" description="Phosphoserine" evidence="1">
    <location>
        <position position="1056"/>
    </location>
</feature>
<feature type="modified residue" description="Phosphoserine" evidence="1">
    <location>
        <position position="1084"/>
    </location>
</feature>
<feature type="glycosylation site" description="N-linked (GlcNAc...) asparagine" evidence="3">
    <location>
        <position position="676"/>
    </location>
</feature>
<feature type="glycosylation site" description="N-linked (GlcNAc...) asparagine" evidence="3">
    <location>
        <position position="686"/>
    </location>
</feature>
<feature type="glycosylation site" description="N-linked (GlcNAc...) asparagine" evidence="3">
    <location>
        <position position="696"/>
    </location>
</feature>
<feature type="splice variant" id="VSP_060135" description="In isoform 8, isoform 9, isoform 10 and isoform 11." evidence="14">
    <original>MEIKDQGAQMEPLLPT</original>
    <variation>MCDLAGISGNRKVMQPGTCEHFQSLGQE</variation>
    <location>
        <begin position="1"/>
        <end position="16"/>
    </location>
</feature>
<feature type="splice variant" id="VSP_061685" description="In isoform 12." evidence="16">
    <original>T</original>
    <variation>TEMCDLAGISGNRKVMQPGTCEHFQSLGQE</variation>
    <location>
        <position position="16"/>
    </location>
</feature>
<feature type="splice variant" id="VSP_019655" description="In isoform 2, isoform 4, isoform 5, isoform 6, isoform 7, isoform 8, isoform 10 and isoform 12." evidence="14 16 17">
    <original>N</original>
    <variation>NA</variation>
    <location>
        <position position="255"/>
    </location>
</feature>
<feature type="splice variant" id="VSP_019656" description="In isoform 2, isoform 3, isoform 4, isoform 6, isoform 7, isoform 8, isoform 10 and isoform 12." evidence="13 14 16 17">
    <location>
        <begin position="286"/>
        <end position="315"/>
    </location>
</feature>
<feature type="splice variant" id="VSP_019657" description="In isoform 7." evidence="17">
    <original>IFGGLILDIKRKAPFFWS</original>
    <variation>SPISGIFASPEFFHRLCG</variation>
    <location>
        <begin position="481"/>
        <end position="498"/>
    </location>
</feature>
<feature type="splice variant" id="VSP_019658" description="In isoform 7." evidence="17">
    <location>
        <begin position="499"/>
        <end position="1117"/>
    </location>
</feature>
<feature type="splice variant" id="VSP_019659" description="In isoform 6." evidence="17">
    <original>LCIIL</original>
    <variation>FLPLT</variation>
    <location>
        <begin position="603"/>
        <end position="607"/>
    </location>
</feature>
<feature type="splice variant" id="VSP_019660" description="In isoform 6." evidence="17">
    <location>
        <begin position="608"/>
        <end position="1117"/>
    </location>
</feature>
<feature type="splice variant" id="VSP_019661" description="In isoform 5." evidence="17">
    <original>E</original>
    <variation>H</variation>
    <location>
        <position position="1053"/>
    </location>
</feature>
<feature type="splice variant" id="VSP_019662" description="In isoform 5." evidence="17">
    <location>
        <begin position="1054"/>
        <end position="1117"/>
    </location>
</feature>
<feature type="splice variant" id="VSP_019663" description="In isoform 2, isoform 3, isoform 10, isoform 11 and isoform 12." evidence="13 14 16 17">
    <original>SPS</original>
    <variation>IESRKEKKADSGKGVDRETCL</variation>
    <location>
        <begin position="1115"/>
        <end position="1117"/>
    </location>
</feature>
<dbReference type="EMBL" id="AF439855">
    <property type="protein sequence ID" value="AAO59639.1"/>
    <property type="molecule type" value="mRNA"/>
</dbReference>
<dbReference type="EMBL" id="AF439856">
    <property type="protein sequence ID" value="AAO59640.1"/>
    <property type="molecule type" value="mRNA"/>
</dbReference>
<dbReference type="EMBL" id="JX073715">
    <property type="protein sequence ID" value="AFP48940.1"/>
    <property type="molecule type" value="mRNA"/>
</dbReference>
<dbReference type="EMBL" id="JX073716">
    <property type="protein sequence ID" value="AFP48941.2"/>
    <property type="molecule type" value="mRNA"/>
</dbReference>
<dbReference type="EMBL" id="JX073717">
    <property type="protein sequence ID" value="AFP48942.1"/>
    <property type="molecule type" value="mRNA"/>
</dbReference>
<dbReference type="EMBL" id="JX073718">
    <property type="protein sequence ID" value="AFP48943.2"/>
    <property type="molecule type" value="mRNA"/>
</dbReference>
<dbReference type="EMBL" id="KF305251">
    <property type="protein sequence ID" value="AGX00872.1"/>
    <property type="molecule type" value="mRNA"/>
</dbReference>
<dbReference type="EMBL" id="KJ452197">
    <property type="protein sequence ID" value="AHX56802.1"/>
    <property type="molecule type" value="mRNA"/>
</dbReference>
<dbReference type="EMBL" id="KY703228">
    <property type="protein sequence ID" value="AVE14257.1"/>
    <property type="molecule type" value="mRNA"/>
</dbReference>
<dbReference type="EMBL" id="AY579373">
    <property type="protein sequence ID" value="AAS89262.1"/>
    <property type="molecule type" value="mRNA"/>
</dbReference>
<dbReference type="EMBL" id="AY579374">
    <property type="protein sequence ID" value="AAS89263.1"/>
    <property type="molecule type" value="mRNA"/>
</dbReference>
<dbReference type="EMBL" id="AY579375">
    <property type="protein sequence ID" value="AAS89264.1"/>
    <property type="molecule type" value="mRNA"/>
</dbReference>
<dbReference type="EMBL" id="AY579376">
    <property type="protein sequence ID" value="AAS89265.1"/>
    <property type="molecule type" value="mRNA"/>
</dbReference>
<dbReference type="EMBL" id="AY579377">
    <property type="protein sequence ID" value="AAS89266.1"/>
    <property type="molecule type" value="mRNA"/>
</dbReference>
<dbReference type="EMBL" id="AABR07052345">
    <property type="status" value="NOT_ANNOTATED_CDS"/>
    <property type="molecule type" value="Genomic_DNA"/>
</dbReference>
<dbReference type="EMBL" id="AABR07052346">
    <property type="status" value="NOT_ANNOTATED_CDS"/>
    <property type="molecule type" value="Genomic_DNA"/>
</dbReference>
<dbReference type="EMBL" id="AABR07052347">
    <property type="status" value="NOT_ANNOTATED_CDS"/>
    <property type="molecule type" value="Genomic_DNA"/>
</dbReference>
<dbReference type="RefSeq" id="NP_001416765.1">
    <molecule id="Q80ZA5-11"/>
    <property type="nucleotide sequence ID" value="NM_001429836.1"/>
</dbReference>
<dbReference type="RefSeq" id="NP_001416766.1">
    <molecule id="Q80ZA5-2"/>
    <property type="nucleotide sequence ID" value="NM_001429837.1"/>
</dbReference>
<dbReference type="RefSeq" id="NP_835193.1">
    <molecule id="Q80ZA5-1"/>
    <property type="nucleotide sequence ID" value="NM_178092.3"/>
</dbReference>
<dbReference type="RefSeq" id="XP_006234338.1">
    <property type="nucleotide sequence ID" value="XM_006234276.3"/>
</dbReference>
<dbReference type="RefSeq" id="XP_006234341.1">
    <property type="nucleotide sequence ID" value="XM_006234279.3"/>
</dbReference>
<dbReference type="RefSeq" id="XP_006234342.1">
    <molecule id="Q80ZA5-10"/>
    <property type="nucleotide sequence ID" value="XM_006234280.5"/>
</dbReference>
<dbReference type="RefSeq" id="XP_006234344.1">
    <property type="nucleotide sequence ID" value="XM_006234282.3"/>
</dbReference>
<dbReference type="RefSeq" id="XP_006234345.1">
    <molecule id="Q80ZA5-3"/>
    <property type="nucleotide sequence ID" value="XM_006234283.5"/>
</dbReference>
<dbReference type="RefSeq" id="XP_006234346.1">
    <property type="nucleotide sequence ID" value="XM_006234284.3"/>
</dbReference>
<dbReference type="RefSeq" id="XP_006234347.1">
    <property type="nucleotide sequence ID" value="XM_006234285.3"/>
</dbReference>
<dbReference type="SMR" id="Q80ZA5"/>
<dbReference type="FunCoup" id="Q80ZA5">
    <property type="interactions" value="2202"/>
</dbReference>
<dbReference type="IntAct" id="Q80ZA5">
    <property type="interactions" value="1"/>
</dbReference>
<dbReference type="MINT" id="Q80ZA5"/>
<dbReference type="STRING" id="10116.ENSRNOP00000059915"/>
<dbReference type="GlyCosmos" id="Q80ZA5">
    <property type="glycosylation" value="3 sites, No reported glycans"/>
</dbReference>
<dbReference type="GlyGen" id="Q80ZA5">
    <property type="glycosylation" value="3 sites"/>
</dbReference>
<dbReference type="iPTMnet" id="Q80ZA5"/>
<dbReference type="PhosphoSitePlus" id="Q80ZA5"/>
<dbReference type="SwissPalm" id="Q80ZA5"/>
<dbReference type="jPOST" id="Q80ZA5"/>
<dbReference type="PaxDb" id="10116-ENSRNOP00000059155"/>
<dbReference type="Ensembl" id="ENSRNOT00000064344.5">
    <molecule id="Q80ZA5-10"/>
    <property type="protein sequence ID" value="ENSRNOP00000059915.4"/>
    <property type="gene ID" value="ENSRNOG00000005307.9"/>
</dbReference>
<dbReference type="Ensembl" id="ENSRNOT00000068238.3">
    <molecule id="Q80ZA5-9"/>
    <property type="protein sequence ID" value="ENSRNOP00000062481.2"/>
    <property type="gene ID" value="ENSRNOG00000005307.9"/>
</dbReference>
<dbReference type="Ensembl" id="ENSRNOT00000082775.2">
    <molecule id="Q80ZA5-12"/>
    <property type="protein sequence ID" value="ENSRNOP00000070628.2"/>
    <property type="gene ID" value="ENSRNOG00000005307.9"/>
</dbReference>
<dbReference type="GeneID" id="295645"/>
<dbReference type="KEGG" id="rno:295645"/>
<dbReference type="UCSC" id="RGD:631407">
    <molecule id="Q80ZA5-1"/>
    <property type="organism name" value="rat"/>
</dbReference>
<dbReference type="AGR" id="RGD:631407"/>
<dbReference type="CTD" id="57282"/>
<dbReference type="RGD" id="631407">
    <property type="gene designation" value="Slc4a10"/>
</dbReference>
<dbReference type="VEuPathDB" id="HostDB:ENSRNOG00000005307"/>
<dbReference type="eggNOG" id="KOG1172">
    <property type="taxonomic scope" value="Eukaryota"/>
</dbReference>
<dbReference type="GeneTree" id="ENSGT00940000156972"/>
<dbReference type="InParanoid" id="Q80ZA5"/>
<dbReference type="PhylomeDB" id="Q80ZA5"/>
<dbReference type="Reactome" id="R-RNO-425381">
    <property type="pathway name" value="Bicarbonate transporters"/>
</dbReference>
<dbReference type="PRO" id="PR:Q80ZA5"/>
<dbReference type="Proteomes" id="UP000002494">
    <property type="component" value="Chromosome 3"/>
</dbReference>
<dbReference type="Bgee" id="ENSRNOG00000005307">
    <property type="expression patterns" value="Expressed in Ammon's horn and 7 other cell types or tissues"/>
</dbReference>
<dbReference type="ExpressionAtlas" id="Q80ZA5">
    <property type="expression patterns" value="baseline and differential"/>
</dbReference>
<dbReference type="GO" id="GO:0097440">
    <property type="term" value="C:apical dendrite"/>
    <property type="evidence" value="ECO:0000266"/>
    <property type="project" value="RGD"/>
</dbReference>
<dbReference type="GO" id="GO:0016324">
    <property type="term" value="C:apical plasma membrane"/>
    <property type="evidence" value="ECO:0000314"/>
    <property type="project" value="UniProtKB"/>
</dbReference>
<dbReference type="GO" id="GO:0043679">
    <property type="term" value="C:axon terminus"/>
    <property type="evidence" value="ECO:0000250"/>
    <property type="project" value="UniProtKB"/>
</dbReference>
<dbReference type="GO" id="GO:0097441">
    <property type="term" value="C:basal dendrite"/>
    <property type="evidence" value="ECO:0000266"/>
    <property type="project" value="RGD"/>
</dbReference>
<dbReference type="GO" id="GO:0016323">
    <property type="term" value="C:basolateral plasma membrane"/>
    <property type="evidence" value="ECO:0000314"/>
    <property type="project" value="UniProtKB"/>
</dbReference>
<dbReference type="GO" id="GO:0097442">
    <property type="term" value="C:CA3 pyramidal cell dendrite"/>
    <property type="evidence" value="ECO:0000266"/>
    <property type="project" value="RGD"/>
</dbReference>
<dbReference type="GO" id="GO:0030425">
    <property type="term" value="C:dendrite"/>
    <property type="evidence" value="ECO:0000250"/>
    <property type="project" value="UniProtKB"/>
</dbReference>
<dbReference type="GO" id="GO:0098982">
    <property type="term" value="C:GABA-ergic synapse"/>
    <property type="evidence" value="ECO:0000250"/>
    <property type="project" value="UniProtKB"/>
</dbReference>
<dbReference type="GO" id="GO:0043025">
    <property type="term" value="C:neuronal cell body"/>
    <property type="evidence" value="ECO:0000250"/>
    <property type="project" value="UniProtKB"/>
</dbReference>
<dbReference type="GO" id="GO:0043204">
    <property type="term" value="C:perikaryon"/>
    <property type="evidence" value="ECO:0007669"/>
    <property type="project" value="UniProtKB-SubCell"/>
</dbReference>
<dbReference type="GO" id="GO:0005886">
    <property type="term" value="C:plasma membrane"/>
    <property type="evidence" value="ECO:0000266"/>
    <property type="project" value="RGD"/>
</dbReference>
<dbReference type="GO" id="GO:0098794">
    <property type="term" value="C:postsynapse"/>
    <property type="evidence" value="ECO:0007669"/>
    <property type="project" value="UniProtKB-SubCell"/>
</dbReference>
<dbReference type="GO" id="GO:0036477">
    <property type="term" value="C:somatodendritic compartment"/>
    <property type="evidence" value="ECO:0000250"/>
    <property type="project" value="UniProtKB"/>
</dbReference>
<dbReference type="GO" id="GO:0045202">
    <property type="term" value="C:synapse"/>
    <property type="evidence" value="ECO:0000250"/>
    <property type="project" value="UniProtKB"/>
</dbReference>
<dbReference type="GO" id="GO:0140892">
    <property type="term" value="F:sodium,bicarbonate:chloride antiporter activity"/>
    <property type="evidence" value="ECO:0000314"/>
    <property type="project" value="UniProtKB"/>
</dbReference>
<dbReference type="GO" id="GO:0008510">
    <property type="term" value="F:sodium:bicarbonate symporter activity"/>
    <property type="evidence" value="ECO:0000314"/>
    <property type="project" value="UniProtKB"/>
</dbReference>
<dbReference type="GO" id="GO:0015701">
    <property type="term" value="P:bicarbonate transport"/>
    <property type="evidence" value="ECO:0000318"/>
    <property type="project" value="GO_Central"/>
</dbReference>
<dbReference type="GO" id="GO:0048854">
    <property type="term" value="P:brain morphogenesis"/>
    <property type="evidence" value="ECO:0000266"/>
    <property type="project" value="RGD"/>
</dbReference>
<dbReference type="GO" id="GO:0035641">
    <property type="term" value="P:locomotory exploration behavior"/>
    <property type="evidence" value="ECO:0000266"/>
    <property type="project" value="RGD"/>
</dbReference>
<dbReference type="GO" id="GO:0035264">
    <property type="term" value="P:multicellular organism growth"/>
    <property type="evidence" value="ECO:0000266"/>
    <property type="project" value="RGD"/>
</dbReference>
<dbReference type="GO" id="GO:0009791">
    <property type="term" value="P:post-embryonic development"/>
    <property type="evidence" value="ECO:0000266"/>
    <property type="project" value="RGD"/>
</dbReference>
<dbReference type="GO" id="GO:1902600">
    <property type="term" value="P:proton transmembrane transport"/>
    <property type="evidence" value="ECO:0000266"/>
    <property type="project" value="RGD"/>
</dbReference>
<dbReference type="GO" id="GO:0021860">
    <property type="term" value="P:pyramidal neuron development"/>
    <property type="evidence" value="ECO:0000266"/>
    <property type="project" value="RGD"/>
</dbReference>
<dbReference type="GO" id="GO:0030641">
    <property type="term" value="P:regulation of cellular pH"/>
    <property type="evidence" value="ECO:0000266"/>
    <property type="project" value="RGD"/>
</dbReference>
<dbReference type="GO" id="GO:0051453">
    <property type="term" value="P:regulation of intracellular pH"/>
    <property type="evidence" value="ECO:0000318"/>
    <property type="project" value="GO_Central"/>
</dbReference>
<dbReference type="GO" id="GO:0006885">
    <property type="term" value="P:regulation of pH"/>
    <property type="evidence" value="ECO:0000266"/>
    <property type="project" value="RGD"/>
</dbReference>
<dbReference type="GO" id="GO:0048172">
    <property type="term" value="P:regulation of short-term neuronal synaptic plasticity"/>
    <property type="evidence" value="ECO:0000250"/>
    <property type="project" value="UniProtKB"/>
</dbReference>
<dbReference type="GO" id="GO:0009416">
    <property type="term" value="P:response to light stimulus"/>
    <property type="evidence" value="ECO:0000266"/>
    <property type="project" value="RGD"/>
</dbReference>
<dbReference type="GO" id="GO:0055085">
    <property type="term" value="P:transmembrane transport"/>
    <property type="evidence" value="ECO:0000318"/>
    <property type="project" value="GO_Central"/>
</dbReference>
<dbReference type="GO" id="GO:0007601">
    <property type="term" value="P:visual perception"/>
    <property type="evidence" value="ECO:0000250"/>
    <property type="project" value="UniProtKB"/>
</dbReference>
<dbReference type="FunFam" id="1.10.287.570:FF:000001">
    <property type="entry name" value="Anion exchange protein"/>
    <property type="match status" value="1"/>
</dbReference>
<dbReference type="Gene3D" id="1.10.287.570">
    <property type="entry name" value="Helical hairpin bin"/>
    <property type="match status" value="1"/>
</dbReference>
<dbReference type="Gene3D" id="3.40.930.10">
    <property type="entry name" value="Mannitol-specific EII, Chain A"/>
    <property type="match status" value="1"/>
</dbReference>
<dbReference type="InterPro" id="IPR013769">
    <property type="entry name" value="Band3_cytoplasmic_dom"/>
</dbReference>
<dbReference type="InterPro" id="IPR011531">
    <property type="entry name" value="HCO3_transpt-like_TM_dom"/>
</dbReference>
<dbReference type="InterPro" id="IPR003020">
    <property type="entry name" value="HCO3_transpt_euk"/>
</dbReference>
<dbReference type="InterPro" id="IPR003024">
    <property type="entry name" value="Na/HCO3_transpt"/>
</dbReference>
<dbReference type="InterPro" id="IPR016152">
    <property type="entry name" value="PTrfase/Anion_transptr"/>
</dbReference>
<dbReference type="NCBIfam" id="TIGR00834">
    <property type="entry name" value="ae"/>
    <property type="match status" value="1"/>
</dbReference>
<dbReference type="PANTHER" id="PTHR11453">
    <property type="entry name" value="ANION EXCHANGE PROTEIN"/>
    <property type="match status" value="1"/>
</dbReference>
<dbReference type="PANTHER" id="PTHR11453:SF32">
    <property type="entry name" value="SODIUM-DRIVEN CHLORIDE BICARBONATE EXCHANGER"/>
    <property type="match status" value="1"/>
</dbReference>
<dbReference type="Pfam" id="PF07565">
    <property type="entry name" value="Band_3_cyto"/>
    <property type="match status" value="1"/>
</dbReference>
<dbReference type="Pfam" id="PF00955">
    <property type="entry name" value="HCO3_cotransp"/>
    <property type="match status" value="1"/>
</dbReference>
<dbReference type="PRINTS" id="PR01231">
    <property type="entry name" value="HCO3TRNSPORT"/>
</dbReference>
<dbReference type="PRINTS" id="PR01232">
    <property type="entry name" value="NAHCO3TRSPRT"/>
</dbReference>
<dbReference type="SUPFAM" id="SSF55804">
    <property type="entry name" value="Phoshotransferase/anion transport protein"/>
    <property type="match status" value="1"/>
</dbReference>
<gene>
    <name evidence="21" type="primary">Slc4a10</name>
    <name evidence="13" type="synonym">Ncbe</name>
</gene>
<name>S4A10_RAT</name>
<comment type="function">
    <text evidence="1 2 9 10 11">Sodium/bicarbonate cotransporter which plays an important role in regulating intracellular pH (PubMed:20566632, PubMed:23409100). Has been shown to act as a sodium/bicarbonate cotransporter in exchange for intracellular chloride (PubMed:10993873, PubMed:20566632). Has also been shown to act as a sodium/biocarbonate cotransporter which does not couple net influx of bicarbonate to net efflux of chloride, with the observed chloride efflux being due to chloride self-exchange (By similarity). Controls neuronal pH and may contribute to the secretion of cerebrospinal fluid (By similarity). Acting on presynaptic intracellular pH, it promotes GABA release, reduces the excitability of CA1 pyramidal neurons, and modulates short-term synaptic plasticity (By similarity). Required in retinal cells to maintain normal pH which is necessary for normal vision (By similarity). In the kidney, likely to mediate bicarbonate reclamation in the apical membrane of the proximal tubules (PubMed:28280139).</text>
</comment>
<comment type="function">
    <molecule>Isoform 12</molecule>
    <text evidence="12">Sodium/bicarbonate cotransporter which mediates cotransport of sodium and bicarbonate in association with an efflux of intracellular chloride and is involved in NaCl absorption in the small intestine.</text>
</comment>
<comment type="catalytic activity">
    <reaction evidence="9">
        <text>2 hydrogencarbonate(out) + chloride(in) + Na(+)(out) = 2 hydrogencarbonate(in) + chloride(out) + Na(+)(in)</text>
        <dbReference type="Rhea" id="RHEA:72739"/>
        <dbReference type="ChEBI" id="CHEBI:17544"/>
        <dbReference type="ChEBI" id="CHEBI:17996"/>
        <dbReference type="ChEBI" id="CHEBI:29101"/>
    </reaction>
</comment>
<comment type="catalytic activity">
    <molecule>Isoform 3</molecule>
    <reaction evidence="12">
        <text>2 hydrogencarbonate(out) + chloride(in) + Na(+)(out) = 2 hydrogencarbonate(in) + chloride(out) + Na(+)(in)</text>
        <dbReference type="Rhea" id="RHEA:72739"/>
        <dbReference type="ChEBI" id="CHEBI:17544"/>
        <dbReference type="ChEBI" id="CHEBI:17996"/>
        <dbReference type="ChEBI" id="CHEBI:29101"/>
    </reaction>
</comment>
<comment type="catalytic activity">
    <molecule>Isoform 12</molecule>
    <reaction evidence="12">
        <text>2 hydrogencarbonate(out) + chloride(in) + Na(+)(out) = 2 hydrogencarbonate(in) + chloride(out) + Na(+)(in)</text>
        <dbReference type="Rhea" id="RHEA:72739"/>
        <dbReference type="ChEBI" id="CHEBI:17544"/>
        <dbReference type="ChEBI" id="CHEBI:17996"/>
        <dbReference type="ChEBI" id="CHEBI:29101"/>
    </reaction>
</comment>
<comment type="interaction">
    <interactant intactId="EBI-8613086">
        <id>Q80ZA5-3</id>
    </interactant>
    <interactant intactId="EBI-1184085">
        <id>P70441</id>
        <label>Nherf1</label>
    </interactant>
    <organismsDiffer>true</organismsDiffer>
    <experiments>3</experiments>
</comment>
<comment type="subcellular location">
    <subcellularLocation>
        <location evidence="6 8 11">Basolateral cell membrane</location>
        <topology evidence="3">Multi-pass membrane protein</topology>
    </subcellularLocation>
    <subcellularLocation>
        <location evidence="11">Apical cell membrane</location>
        <topology evidence="3">Multi-pass membrane protein</topology>
    </subcellularLocation>
    <subcellularLocation>
        <location evidence="1">Cell projection</location>
        <location evidence="1">Dendrite</location>
    </subcellularLocation>
    <subcellularLocation>
        <location evidence="1">Cell projection</location>
        <location evidence="1">Axon</location>
    </subcellularLocation>
    <subcellularLocation>
        <location evidence="1">Perikaryon</location>
    </subcellularLocation>
    <subcellularLocation>
        <location evidence="1">Presynapse</location>
    </subcellularLocation>
    <subcellularLocation>
        <location evidence="1">Postsynapse</location>
    </subcellularLocation>
    <text evidence="1 11">Detected in dendrites and axon terminals of retinal OFF bipolar cells and in axon terminals of ON bipolar cells. In amacrine cells, located in the perikaryon. Also detected in basal and apical dendrites of hippocampal pyramidal cells (By similarity). Localized to GABAergic inhibitory presynapses (By similarity). In the kidney, isoforms starting with Met-Glu-Ile-Lys localize predominantly to the basolateral membrane of renal thick ascending limbs and inner medullary collecting ducts while isoforms starting with Met-Cys-Asp-Leu localize to the apical membrane of proximal tubules (PubMed:28280139).</text>
</comment>
<comment type="subcellular location">
    <molecule>Isoform 12</molecule>
    <subcellularLocation>
        <location evidence="12">Apical cell membrane</location>
        <topology>Multi-pass membrane protein</topology>
    </subcellularLocation>
</comment>
<comment type="alternative products">
    <event type="alternative promoter"/>
    <event type="alternative splicing"/>
    <isoform>
        <id>Q80ZA5-1</id>
        <name>1</name>
        <name>rb1NCBE</name>
        <sequence type="displayed"/>
    </isoform>
    <isoform>
        <id>Q80ZA5-2</id>
        <name>2</name>
        <name>rb4NCBE</name>
        <sequence type="described" ref="VSP_019655 VSP_019656 VSP_019663"/>
    </isoform>
    <isoform>
        <id>Q80ZA5-3</id>
        <name>3</name>
        <name>rb2NCBE</name>
        <sequence type="described" ref="VSP_019656 VSP_019663"/>
    </isoform>
    <isoform>
        <id>Q80ZA5-4</id>
        <name>4</name>
        <name>rb5NCBE</name>
        <sequence type="described" ref="VSP_019655 VSP_019656"/>
    </isoform>
    <isoform>
        <id>Q80ZA5-5</id>
        <name>5</name>
        <name>rb3NCBE</name>
        <sequence type="described" ref="VSP_019655 VSP_019661 VSP_019662"/>
    </isoform>
    <isoform>
        <id>Q80ZA5-6</id>
        <name>6</name>
        <name>rb6NCBE</name>
        <sequence type="described" ref="VSP_019655 VSP_019656 VSP_019659 VSP_019660"/>
    </isoform>
    <isoform>
        <id>Q80ZA5-7</id>
        <name>7</name>
        <name>rb7NCBE</name>
        <sequence type="described" ref="VSP_019655 VSP_019656 VSP_019657 VSP_019658"/>
    </isoform>
    <isoform>
        <id>Q80ZA5-8</id>
        <name>8</name>
        <name evidence="14">NBCn2-E</name>
        <sequence type="described" ref="VSP_060135 VSP_019655 VSP_019656"/>
    </isoform>
    <isoform>
        <id>Q80ZA5-9</id>
        <name>9</name>
        <name evidence="14">NBCn2-F</name>
        <sequence type="described" ref="VSP_060135"/>
    </isoform>
    <isoform>
        <id>Q80ZA5-10</id>
        <name>10</name>
        <name evidence="14">NBCn2-G</name>
        <sequence type="described" ref="VSP_060135 VSP_019655 VSP_019656 VSP_019663"/>
    </isoform>
    <isoform>
        <id>Q80ZA5-11</id>
        <name>11</name>
        <name evidence="14">NBCn2-H</name>
        <sequence type="described" ref="VSP_060135 VSP_019663"/>
    </isoform>
    <isoform>
        <id>Q80ZA5-12</id>
        <name>12</name>
        <name evidence="16">NBCn2-K</name>
        <sequence type="described" ref="VSP_061685 VSP_019655 VSP_019656 VSP_019663"/>
    </isoform>
    <text evidence="10">The use of 2 alternative promoters gives rise to isoforms which differ at the N-terminus. In addition, alternative splicing gives rise to further isoform diversity.</text>
</comment>
<comment type="tissue specificity">
    <text evidence="5 6 7 8 10 11">In the brain, detected in cerebral cortex, subcortex, cerebellum, hippocampus and medulla (at protein level) (PubMed:18061361). Expressed in neurons but not in astrocytes (at protein level) (PubMed:18061361). Isoforms starting with Met-Glu-Ile-Lys are found predominantly in the brain with lower levels in the eye while isoforms starting with Met-Cys-Asp-Leu are most abundant in the kidney with lower levels in the duodenum, jejunum and ileum (at protein level) (PubMed:23409100). In the kidney, isoforms starting with Met-Cys-Asp-Leu are primarily expressed in the cortex, the outer stripe of the outer medulla and the inner stripe of the outer medulla (ISOM) but are not detectable in the inner medulla (IM) while isoforms starting with Met-Glu-Ile-Lys are predominantly expressed in the ISOM and IM (PubMed:28280139). Expressed in the brain, in the hippocampus as well as in dentate gyrus, cortical layers, cerebellum, olfactory bulb and in the epithelial cells of the choroid plexus. Detected in pituitary, testis, kidney and ileum. Detected also in spleen and lung.</text>
</comment>
<comment type="tissue specificity">
    <molecule>Isoform 12</molecule>
    <text evidence="12">Mainly expressed in the jejenum (at protein level).</text>
</comment>
<comment type="developmental stage">
    <text evidence="6">Expressed in spinal cord and brain at 19 dpc through adulthood.</text>
</comment>
<comment type="domain">
    <text evidence="15">The N-terminal cytoplasmic domain is likely to have a high level of intrinsic disorder.</text>
</comment>
<comment type="PTM">
    <text evidence="1">N-glycosylated.</text>
</comment>
<comment type="similarity">
    <text evidence="18">Belongs to the anion exchanger (TC 2.A.31) family.</text>
</comment>
<comment type="caution">
    <text evidence="2 5 9">Has been shown to act as a sodium/bicarbonate cotransporter in exchange for intracellular chloride (PubMed:10993873, PubMed:20566632). Has also been shown to act as a sodium/biocarbonate cotransporter which is not responsible for net efflux of chloride, with the observed chloride efflux being due to chloride self-exchange (By similarity).</text>
</comment>
<protein>
    <recommendedName>
        <fullName evidence="13">Sodium-driven chloride bicarbonate exchanger</fullName>
    </recommendedName>
    <alternativeName>
        <fullName evidence="21">Solute carrier family 4 member 10</fullName>
    </alternativeName>
</protein>
<sequence>MEIKDQGAQMEPLLPTRNDEEAVVDRGGTRSILKTHFEKEDLEGHRTLFIGVHVPLGGRKSHRRHRHRGHKHRKRDRERDSGLEDGGESPSFDTPSQRVQFILGTEDDDEEHIPHDLFTELDEICWREGEDAEWRETARWLKFEEDVEDGGERWSKPYVATLSLHSLFELRSCILNGTVLLDMHANTLEEIADMVLDQQVSSGQLNEDVRHRVHEALMKQHHHQSQKKLTNRIPIVRSFADIGKKQSEPNSMDKNGQVVSPQSAPACAENKNDVSRENSTVDFSKGLGGQQKGHTSPCGMKQRLDKGPPHQQEREVDLHFMKKIPPGAEASNILVGELEFLDRTVVAFVRLSPAVLLQGLAEVPIPSRFLFILLGPLGKGQQYHEIGRSIATLMTDEVFHDVAYKAKDRNDLVSGIDEFLDQVTVLPPGEWDPSIRIEPPKNVPSQEKRKTPSLPNGTAAHGGPEQHGGHSGPELQRTGRIFGGLILDIKRKAPFFWSDFRDAFSLQCLASFLFLYCACMSPVITFGGLLGEATEGRISAIESLFGASMTGIAYSLFGGQPLTILGSTGPVLVFEKILFKFCKEYGLSYLSLRASIGLWTATLCIILVATDASSLVCYITRFTEEAFASLICIIFIYEALEKLFELSESYPINMHNDLELLTQYSCNCMEPHSPSNDTLKEWRESNISASDIIWGNLTVSECRSLHGEYVGRACGHGHPYVPDVLFWSVILFFSTVTMSATLKQFKTSRYFPTKVRSIVSDFAVFLTILCMVLIDYAIGIPSPKLQVPSVFKPTRDDRGWFVTPLGPNPWWTIIAAIIPALLCTILIFMDQQITAVIINRKEHKLKKGCGYHLDLLMVAVMLGVCSIMGLPWFVAATVLSITHVNSLKLESECSAPGEQPKFLGIREQRVTGLMIFILMGSSVFMTSILKFIPMPVLYGVFLYMGASSLKGIQLFDRIKLFWMPAKHQPDFIYLRHVPLRKVHLFTVIQMSCLGLLWIIKVSRAAIVFPMMVLALVFVRKLMDFLFTKRELSWLDDLMPESKKKKLEDAEKEEEQSMLAMEDEGTVQLPLEGHYRDDPSVINISDEMSKTAMWGNLLVTADNSKEKESRFPSKSSPS</sequence>